<accession>B2A383</accession>
<sequence>MDSIFKDAEQKMKKALSSLKSELASLRAGRANPSILEGINVDYYGMATPLNQLANISAPEPRLLVVQPYDKSAIEDIEKAILKSDVGLTPNNDGQVIRLAVPQLTEERRNELVKIVRQKGEDTKVVVRNVRRDANDELKKLEKEKEISEDESIRGQDEIQKITDKYIKKIDEVMNAKEEEITSF</sequence>
<proteinExistence type="inferred from homology"/>
<name>RRF_NATTJ</name>
<gene>
    <name evidence="1" type="primary">frr</name>
    <name type="ordered locus">Nther_1430</name>
</gene>
<organism>
    <name type="scientific">Natranaerobius thermophilus (strain ATCC BAA-1301 / DSM 18059 / JW/NM-WN-LF)</name>
    <dbReference type="NCBI Taxonomy" id="457570"/>
    <lineage>
        <taxon>Bacteria</taxon>
        <taxon>Bacillati</taxon>
        <taxon>Bacillota</taxon>
        <taxon>Clostridia</taxon>
        <taxon>Natranaerobiales</taxon>
        <taxon>Natranaerobiaceae</taxon>
        <taxon>Natranaerobius</taxon>
    </lineage>
</organism>
<comment type="function">
    <text evidence="1">Responsible for the release of ribosomes from messenger RNA at the termination of protein biosynthesis. May increase the efficiency of translation by recycling ribosomes from one round of translation to another.</text>
</comment>
<comment type="subcellular location">
    <subcellularLocation>
        <location evidence="1">Cytoplasm</location>
    </subcellularLocation>
</comment>
<comment type="similarity">
    <text evidence="1">Belongs to the RRF family.</text>
</comment>
<evidence type="ECO:0000255" key="1">
    <source>
        <dbReference type="HAMAP-Rule" id="MF_00040"/>
    </source>
</evidence>
<keyword id="KW-0963">Cytoplasm</keyword>
<keyword id="KW-0648">Protein biosynthesis</keyword>
<keyword id="KW-1185">Reference proteome</keyword>
<dbReference type="EMBL" id="CP001034">
    <property type="protein sequence ID" value="ACB85013.1"/>
    <property type="molecule type" value="Genomic_DNA"/>
</dbReference>
<dbReference type="RefSeq" id="WP_012447887.1">
    <property type="nucleotide sequence ID" value="NC_010718.1"/>
</dbReference>
<dbReference type="SMR" id="B2A383"/>
<dbReference type="FunCoup" id="B2A383">
    <property type="interactions" value="465"/>
</dbReference>
<dbReference type="STRING" id="457570.Nther_1430"/>
<dbReference type="KEGG" id="nth:Nther_1430"/>
<dbReference type="eggNOG" id="COG0233">
    <property type="taxonomic scope" value="Bacteria"/>
</dbReference>
<dbReference type="HOGENOM" id="CLU_073981_2_0_9"/>
<dbReference type="InParanoid" id="B2A383"/>
<dbReference type="OrthoDB" id="9804006at2"/>
<dbReference type="Proteomes" id="UP000001683">
    <property type="component" value="Chromosome"/>
</dbReference>
<dbReference type="GO" id="GO:0005737">
    <property type="term" value="C:cytoplasm"/>
    <property type="evidence" value="ECO:0007669"/>
    <property type="project" value="UniProtKB-SubCell"/>
</dbReference>
<dbReference type="GO" id="GO:0043023">
    <property type="term" value="F:ribosomal large subunit binding"/>
    <property type="evidence" value="ECO:0007669"/>
    <property type="project" value="TreeGrafter"/>
</dbReference>
<dbReference type="GO" id="GO:0006415">
    <property type="term" value="P:translational termination"/>
    <property type="evidence" value="ECO:0007669"/>
    <property type="project" value="UniProtKB-UniRule"/>
</dbReference>
<dbReference type="CDD" id="cd00520">
    <property type="entry name" value="RRF"/>
    <property type="match status" value="1"/>
</dbReference>
<dbReference type="FunFam" id="1.10.132.20:FF:000001">
    <property type="entry name" value="Ribosome-recycling factor"/>
    <property type="match status" value="1"/>
</dbReference>
<dbReference type="FunFam" id="3.30.1360.40:FF:000001">
    <property type="entry name" value="Ribosome-recycling factor"/>
    <property type="match status" value="1"/>
</dbReference>
<dbReference type="Gene3D" id="3.30.1360.40">
    <property type="match status" value="1"/>
</dbReference>
<dbReference type="Gene3D" id="1.10.132.20">
    <property type="entry name" value="Ribosome-recycling factor"/>
    <property type="match status" value="1"/>
</dbReference>
<dbReference type="HAMAP" id="MF_00040">
    <property type="entry name" value="RRF"/>
    <property type="match status" value="1"/>
</dbReference>
<dbReference type="InterPro" id="IPR002661">
    <property type="entry name" value="Ribosome_recyc_fac"/>
</dbReference>
<dbReference type="InterPro" id="IPR023584">
    <property type="entry name" value="Ribosome_recyc_fac_dom"/>
</dbReference>
<dbReference type="InterPro" id="IPR036191">
    <property type="entry name" value="RRF_sf"/>
</dbReference>
<dbReference type="NCBIfam" id="TIGR00496">
    <property type="entry name" value="frr"/>
    <property type="match status" value="1"/>
</dbReference>
<dbReference type="PANTHER" id="PTHR20982:SF3">
    <property type="entry name" value="MITOCHONDRIAL RIBOSOME RECYCLING FACTOR PSEUDO 1"/>
    <property type="match status" value="1"/>
</dbReference>
<dbReference type="PANTHER" id="PTHR20982">
    <property type="entry name" value="RIBOSOME RECYCLING FACTOR"/>
    <property type="match status" value="1"/>
</dbReference>
<dbReference type="Pfam" id="PF01765">
    <property type="entry name" value="RRF"/>
    <property type="match status" value="1"/>
</dbReference>
<dbReference type="SUPFAM" id="SSF55194">
    <property type="entry name" value="Ribosome recycling factor, RRF"/>
    <property type="match status" value="1"/>
</dbReference>
<protein>
    <recommendedName>
        <fullName evidence="1">Ribosome-recycling factor</fullName>
        <shortName evidence="1">RRF</shortName>
    </recommendedName>
    <alternativeName>
        <fullName evidence="1">Ribosome-releasing factor</fullName>
    </alternativeName>
</protein>
<reference key="1">
    <citation type="submission" date="2008-04" db="EMBL/GenBank/DDBJ databases">
        <title>Complete sequence of chromosome of Natranaerobius thermophilus JW/NM-WN-LF.</title>
        <authorList>
            <consortium name="US DOE Joint Genome Institute"/>
            <person name="Copeland A."/>
            <person name="Lucas S."/>
            <person name="Lapidus A."/>
            <person name="Glavina del Rio T."/>
            <person name="Dalin E."/>
            <person name="Tice H."/>
            <person name="Bruce D."/>
            <person name="Goodwin L."/>
            <person name="Pitluck S."/>
            <person name="Chertkov O."/>
            <person name="Brettin T."/>
            <person name="Detter J.C."/>
            <person name="Han C."/>
            <person name="Kuske C.R."/>
            <person name="Schmutz J."/>
            <person name="Larimer F."/>
            <person name="Land M."/>
            <person name="Hauser L."/>
            <person name="Kyrpides N."/>
            <person name="Lykidis A."/>
            <person name="Mesbah N.M."/>
            <person name="Wiegel J."/>
        </authorList>
    </citation>
    <scope>NUCLEOTIDE SEQUENCE [LARGE SCALE GENOMIC DNA]</scope>
    <source>
        <strain>ATCC BAA-1301 / DSM 18059 / JW/NM-WN-LF</strain>
    </source>
</reference>
<feature type="chain" id="PRO_1000090762" description="Ribosome-recycling factor">
    <location>
        <begin position="1"/>
        <end position="184"/>
    </location>
</feature>